<dbReference type="EMBL" id="AC004683">
    <property type="protein sequence ID" value="AAC28770.1"/>
    <property type="molecule type" value="Genomic_DNA"/>
</dbReference>
<dbReference type="EMBL" id="CP002685">
    <property type="protein sequence ID" value="AEC09525.1"/>
    <property type="molecule type" value="Genomic_DNA"/>
</dbReference>
<dbReference type="EMBL" id="AY072421">
    <property type="protein sequence ID" value="AAL62413.1"/>
    <property type="molecule type" value="mRNA"/>
</dbReference>
<dbReference type="EMBL" id="BT006276">
    <property type="protein sequence ID" value="AAP13384.1"/>
    <property type="molecule type" value="mRNA"/>
</dbReference>
<dbReference type="PIR" id="T02511">
    <property type="entry name" value="T02511"/>
</dbReference>
<dbReference type="RefSeq" id="NP_001318372.1">
    <property type="nucleotide sequence ID" value="NM_001336696.1"/>
</dbReference>
<dbReference type="BioGRID" id="3756">
    <property type="interactions" value="4"/>
</dbReference>
<dbReference type="FunCoup" id="O80917">
    <property type="interactions" value="6"/>
</dbReference>
<dbReference type="IntAct" id="O80917">
    <property type="interactions" value="4"/>
</dbReference>
<dbReference type="STRING" id="3702.O80917"/>
<dbReference type="PaxDb" id="3702-AT2G38340.1"/>
<dbReference type="ProteomicsDB" id="242296"/>
<dbReference type="EnsemblPlants" id="AT2G38340.1">
    <property type="protein sequence ID" value="AT2G38340.1"/>
    <property type="gene ID" value="AT2G38340"/>
</dbReference>
<dbReference type="GeneID" id="818414"/>
<dbReference type="Gramene" id="AT2G38340.1">
    <property type="protein sequence ID" value="AT2G38340.1"/>
    <property type="gene ID" value="AT2G38340"/>
</dbReference>
<dbReference type="KEGG" id="ath:AT2G38340"/>
<dbReference type="Araport" id="AT2G38340"/>
<dbReference type="TAIR" id="AT2G38340">
    <property type="gene designation" value="DREB19"/>
</dbReference>
<dbReference type="eggNOG" id="ENOG502S30F">
    <property type="taxonomic scope" value="Eukaryota"/>
</dbReference>
<dbReference type="HOGENOM" id="CLU_1125889_0_0_1"/>
<dbReference type="InParanoid" id="O80917"/>
<dbReference type="OMA" id="ELGHDKT"/>
<dbReference type="OrthoDB" id="550883at2759"/>
<dbReference type="PhylomeDB" id="O80917"/>
<dbReference type="PRO" id="PR:O80917"/>
<dbReference type="Proteomes" id="UP000006548">
    <property type="component" value="Chromosome 2"/>
</dbReference>
<dbReference type="ExpressionAtlas" id="O80917">
    <property type="expression patterns" value="baseline and differential"/>
</dbReference>
<dbReference type="GO" id="GO:0005634">
    <property type="term" value="C:nucleus"/>
    <property type="evidence" value="ECO:0000314"/>
    <property type="project" value="TAIR"/>
</dbReference>
<dbReference type="GO" id="GO:0003700">
    <property type="term" value="F:DNA-binding transcription factor activity"/>
    <property type="evidence" value="ECO:0000250"/>
    <property type="project" value="TAIR"/>
</dbReference>
<dbReference type="GO" id="GO:0000976">
    <property type="term" value="F:transcription cis-regulatory region binding"/>
    <property type="evidence" value="ECO:0000353"/>
    <property type="project" value="TAIR"/>
</dbReference>
<dbReference type="GO" id="GO:0009738">
    <property type="term" value="P:abscisic acid-activated signaling pathway"/>
    <property type="evidence" value="ECO:0007669"/>
    <property type="project" value="UniProtKB-KW"/>
</dbReference>
<dbReference type="GO" id="GO:0034605">
    <property type="term" value="P:cellular response to heat"/>
    <property type="evidence" value="ECO:0000270"/>
    <property type="project" value="TAIR"/>
</dbReference>
<dbReference type="GO" id="GO:0045893">
    <property type="term" value="P:positive regulation of DNA-templated transcription"/>
    <property type="evidence" value="ECO:0000314"/>
    <property type="project" value="TAIR"/>
</dbReference>
<dbReference type="GO" id="GO:0009651">
    <property type="term" value="P:response to salt stress"/>
    <property type="evidence" value="ECO:0000315"/>
    <property type="project" value="TAIR"/>
</dbReference>
<dbReference type="GO" id="GO:0009414">
    <property type="term" value="P:response to water deprivation"/>
    <property type="evidence" value="ECO:0000270"/>
    <property type="project" value="TAIR"/>
</dbReference>
<dbReference type="CDD" id="cd00018">
    <property type="entry name" value="AP2"/>
    <property type="match status" value="1"/>
</dbReference>
<dbReference type="FunFam" id="3.30.730.10:FF:000001">
    <property type="entry name" value="Ethylene-responsive transcription factor 2"/>
    <property type="match status" value="1"/>
</dbReference>
<dbReference type="Gene3D" id="3.30.730.10">
    <property type="entry name" value="AP2/ERF domain"/>
    <property type="match status" value="1"/>
</dbReference>
<dbReference type="InterPro" id="IPR001471">
    <property type="entry name" value="AP2/ERF_dom"/>
</dbReference>
<dbReference type="InterPro" id="IPR036955">
    <property type="entry name" value="AP2/ERF_dom_sf"/>
</dbReference>
<dbReference type="InterPro" id="IPR016177">
    <property type="entry name" value="DNA-bd_dom_sf"/>
</dbReference>
<dbReference type="PANTHER" id="PTHR31241:SF37">
    <property type="entry name" value="DEHYDRATION-RESPONSIVE ELEMENT-BINDING PROTEIN 2A-RELATED"/>
    <property type="match status" value="1"/>
</dbReference>
<dbReference type="PANTHER" id="PTHR31241">
    <property type="entry name" value="DEHYDRATION-RESPONSIVE ELEMENT-BINDING PROTEIN 2C"/>
    <property type="match status" value="1"/>
</dbReference>
<dbReference type="Pfam" id="PF00847">
    <property type="entry name" value="AP2"/>
    <property type="match status" value="1"/>
</dbReference>
<dbReference type="PRINTS" id="PR00367">
    <property type="entry name" value="ETHRSPELEMNT"/>
</dbReference>
<dbReference type="SMART" id="SM00380">
    <property type="entry name" value="AP2"/>
    <property type="match status" value="1"/>
</dbReference>
<dbReference type="SUPFAM" id="SSF54171">
    <property type="entry name" value="DNA-binding domain"/>
    <property type="match status" value="1"/>
</dbReference>
<dbReference type="PROSITE" id="PS51032">
    <property type="entry name" value="AP2_ERF"/>
    <property type="match status" value="1"/>
</dbReference>
<organism>
    <name type="scientific">Arabidopsis thaliana</name>
    <name type="common">Mouse-ear cress</name>
    <dbReference type="NCBI Taxonomy" id="3702"/>
    <lineage>
        <taxon>Eukaryota</taxon>
        <taxon>Viridiplantae</taxon>
        <taxon>Streptophyta</taxon>
        <taxon>Embryophyta</taxon>
        <taxon>Tracheophyta</taxon>
        <taxon>Spermatophyta</taxon>
        <taxon>Magnoliopsida</taxon>
        <taxon>eudicotyledons</taxon>
        <taxon>Gunneridae</taxon>
        <taxon>Pentapetalae</taxon>
        <taxon>rosids</taxon>
        <taxon>malvids</taxon>
        <taxon>Brassicales</taxon>
        <taxon>Brassicaceae</taxon>
        <taxon>Camelineae</taxon>
        <taxon>Arabidopsis</taxon>
    </lineage>
</organism>
<evidence type="ECO:0000255" key="1"/>
<evidence type="ECO:0000255" key="2">
    <source>
        <dbReference type="PROSITE-ProRule" id="PRU00366"/>
    </source>
</evidence>
<evidence type="ECO:0000256" key="3">
    <source>
        <dbReference type="SAM" id="MobiDB-lite"/>
    </source>
</evidence>
<evidence type="ECO:0000269" key="4">
    <source>
    </source>
</evidence>
<evidence type="ECO:0000269" key="5">
    <source>
    </source>
</evidence>
<evidence type="ECO:0000303" key="6">
    <source>
    </source>
</evidence>
<evidence type="ECO:0000305" key="7"/>
<comment type="function">
    <text evidence="4 5">Transcriptional activator that binds specifically to the DNA sequence 5'-[AG]CCGAC-3'. Binding to the C-repeat/DRE element mediates abscisic acid-inducible transcription. Involved in the regulation of plant development and tolerance to abiotic stresses (PubMed:21069430).</text>
</comment>
<comment type="subcellular location">
    <subcellularLocation>
        <location evidence="2 5">Nucleus</location>
    </subcellularLocation>
</comment>
<comment type="tissue specificity">
    <text evidence="5">Expressed in xylem tissues, stigma, anthers and region where sepals and petals attach the peduncle.</text>
</comment>
<comment type="induction">
    <text evidence="4">By abscisic acid (ABA) treatment (PubMed:11798174). Induced by salt, heat and drought stresses.</text>
</comment>
<comment type="similarity">
    <text evidence="7">Belongs to the AP2/ERF transcription factor family. ERF subfamily.</text>
</comment>
<protein>
    <recommendedName>
        <fullName>Dehydration-responsive element-binding protein 2E</fullName>
        <shortName>Protein DREB2E</shortName>
    </recommendedName>
    <alternativeName>
        <fullName evidence="6">Dehydration response element-binding protein 19</fullName>
    </alternativeName>
</protein>
<proteinExistence type="evidence at transcript level"/>
<name>DRE2E_ARATH</name>
<sequence>MEKEDNGSKQSSSASVVSSRRRRRVVEPVEATLQRWEEEGLARARRVQAKGSKKGCMRGKGGPENPVCRFRGVRQRVWGKWVAEIREPVSHRGANSSRSKRLWLGTFATAAEAALAYDRAASVMYGPYARLNFPEDLGGGRKKDEEAESSGGYWLETNKAGNGVIETEGGKDYVVYNEDAIELGHDKTQNPMTDNEIVNPAVKSEEGYSYDRFKLDNGLLYNEPQSSSYHQGGGFDSYFEYFRF</sequence>
<reference key="1">
    <citation type="journal article" date="1999" name="Nature">
        <title>Sequence and analysis of chromosome 2 of the plant Arabidopsis thaliana.</title>
        <authorList>
            <person name="Lin X."/>
            <person name="Kaul S."/>
            <person name="Rounsley S.D."/>
            <person name="Shea T.P."/>
            <person name="Benito M.-I."/>
            <person name="Town C.D."/>
            <person name="Fujii C.Y."/>
            <person name="Mason T.M."/>
            <person name="Bowman C.L."/>
            <person name="Barnstead M.E."/>
            <person name="Feldblyum T.V."/>
            <person name="Buell C.R."/>
            <person name="Ketchum K.A."/>
            <person name="Lee J.J."/>
            <person name="Ronning C.M."/>
            <person name="Koo H.L."/>
            <person name="Moffat K.S."/>
            <person name="Cronin L.A."/>
            <person name="Shen M."/>
            <person name="Pai G."/>
            <person name="Van Aken S."/>
            <person name="Umayam L."/>
            <person name="Tallon L.J."/>
            <person name="Gill J.E."/>
            <person name="Adams M.D."/>
            <person name="Carrera A.J."/>
            <person name="Creasy T.H."/>
            <person name="Goodman H.M."/>
            <person name="Somerville C.R."/>
            <person name="Copenhaver G.P."/>
            <person name="Preuss D."/>
            <person name="Nierman W.C."/>
            <person name="White O."/>
            <person name="Eisen J.A."/>
            <person name="Salzberg S.L."/>
            <person name="Fraser C.M."/>
            <person name="Venter J.C."/>
        </authorList>
    </citation>
    <scope>NUCLEOTIDE SEQUENCE [LARGE SCALE GENOMIC DNA]</scope>
    <source>
        <strain>cv. Columbia</strain>
    </source>
</reference>
<reference key="2">
    <citation type="journal article" date="2017" name="Plant J.">
        <title>Araport11: a complete reannotation of the Arabidopsis thaliana reference genome.</title>
        <authorList>
            <person name="Cheng C.Y."/>
            <person name="Krishnakumar V."/>
            <person name="Chan A.P."/>
            <person name="Thibaud-Nissen F."/>
            <person name="Schobel S."/>
            <person name="Town C.D."/>
        </authorList>
    </citation>
    <scope>GENOME REANNOTATION</scope>
    <source>
        <strain>cv. Columbia</strain>
    </source>
</reference>
<reference key="3">
    <citation type="journal article" date="2003" name="Science">
        <title>Empirical analysis of transcriptional activity in the Arabidopsis genome.</title>
        <authorList>
            <person name="Yamada K."/>
            <person name="Lim J."/>
            <person name="Dale J.M."/>
            <person name="Chen H."/>
            <person name="Shinn P."/>
            <person name="Palm C.J."/>
            <person name="Southwick A.M."/>
            <person name="Wu H.C."/>
            <person name="Kim C.J."/>
            <person name="Nguyen M."/>
            <person name="Pham P.K."/>
            <person name="Cheuk R.F."/>
            <person name="Karlin-Newmann G."/>
            <person name="Liu S.X."/>
            <person name="Lam B."/>
            <person name="Sakano H."/>
            <person name="Wu T."/>
            <person name="Yu G."/>
            <person name="Miranda M."/>
            <person name="Quach H.L."/>
            <person name="Tripp M."/>
            <person name="Chang C.H."/>
            <person name="Lee J.M."/>
            <person name="Toriumi M.J."/>
            <person name="Chan M.M."/>
            <person name="Tang C.C."/>
            <person name="Onodera C.S."/>
            <person name="Deng J.M."/>
            <person name="Akiyama K."/>
            <person name="Ansari Y."/>
            <person name="Arakawa T."/>
            <person name="Banh J."/>
            <person name="Banno F."/>
            <person name="Bowser L."/>
            <person name="Brooks S.Y."/>
            <person name="Carninci P."/>
            <person name="Chao Q."/>
            <person name="Choy N."/>
            <person name="Enju A."/>
            <person name="Goldsmith A.D."/>
            <person name="Gurjal M."/>
            <person name="Hansen N.F."/>
            <person name="Hayashizaki Y."/>
            <person name="Johnson-Hopson C."/>
            <person name="Hsuan V.W."/>
            <person name="Iida K."/>
            <person name="Karnes M."/>
            <person name="Khan S."/>
            <person name="Koesema E."/>
            <person name="Ishida J."/>
            <person name="Jiang P.X."/>
            <person name="Jones T."/>
            <person name="Kawai J."/>
            <person name="Kamiya A."/>
            <person name="Meyers C."/>
            <person name="Nakajima M."/>
            <person name="Narusaka M."/>
            <person name="Seki M."/>
            <person name="Sakurai T."/>
            <person name="Satou M."/>
            <person name="Tamse R."/>
            <person name="Vaysberg M."/>
            <person name="Wallender E.K."/>
            <person name="Wong C."/>
            <person name="Yamamura Y."/>
            <person name="Yuan S."/>
            <person name="Shinozaki K."/>
            <person name="Davis R.W."/>
            <person name="Theologis A."/>
            <person name="Ecker J.R."/>
        </authorList>
    </citation>
    <scope>NUCLEOTIDE SEQUENCE [LARGE SCALE MRNA]</scope>
    <source>
        <strain>cv. Columbia</strain>
    </source>
</reference>
<reference key="4">
    <citation type="journal article" date="2002" name="Biochem. Biophys. Res. Commun.">
        <title>DNA-binding specificity of the ERF/AP2 domain of Arabidopsis DREBs, transcription factors involved in dehydration- and cold-inducible gene expression.</title>
        <authorList>
            <person name="Sakuma Y."/>
            <person name="Liu Q."/>
            <person name="Dubouzet J.G."/>
            <person name="Abe H."/>
            <person name="Shinozaki K."/>
            <person name="Yamaguchi-Shinozaki K."/>
        </authorList>
    </citation>
    <scope>GENE FAMILY</scope>
    <scope>FUNCTION</scope>
    <scope>INDUCTION</scope>
</reference>
<reference key="5">
    <citation type="journal article" date="2006" name="Plant Physiol.">
        <title>Genome-wide analysis of the ERF gene family in Arabidopsis and rice.</title>
        <authorList>
            <person name="Nakano T."/>
            <person name="Suzuki K."/>
            <person name="Fujimura T."/>
            <person name="Shinshi H."/>
        </authorList>
    </citation>
    <scope>GENE FAMILY</scope>
    <scope>NOMENCLATURE</scope>
</reference>
<reference key="6">
    <citation type="journal article" date="2011" name="Plant Mol. Biol.">
        <title>Functional characterization of four APETALA2-family genes (RAP2.6, RAP2.6L, DREB19 and DREB26) in Arabidopsis.</title>
        <authorList>
            <person name="Krishnaswamy S."/>
            <person name="Verma S."/>
            <person name="Rahman M.H."/>
            <person name="Kav N.N."/>
        </authorList>
    </citation>
    <scope>FUNCTION</scope>
    <scope>SUBCELLULAR LOCATION</scope>
    <scope>TISSUE SPECIFICITY</scope>
    <scope>INDUCTION</scope>
</reference>
<gene>
    <name type="primary">DREB2E</name>
    <name evidence="6" type="synonym">DREB19</name>
    <name type="synonym">ERF046</name>
    <name type="ordered locus">At2g38340</name>
    <name type="ORF">T19C21.17</name>
</gene>
<feature type="chain" id="PRO_0000112538" description="Dehydration-responsive element-binding protein 2E">
    <location>
        <begin position="1"/>
        <end position="244"/>
    </location>
</feature>
<feature type="DNA-binding region" description="AP2/ERF" evidence="2">
    <location>
        <begin position="69"/>
        <end position="134"/>
    </location>
</feature>
<feature type="region of interest" description="Disordered" evidence="3">
    <location>
        <begin position="1"/>
        <end position="25"/>
    </location>
</feature>
<feature type="short sequence motif" description="Nuclear localization signal" evidence="1">
    <location>
        <begin position="20"/>
        <end position="46"/>
    </location>
</feature>
<accession>O80917</accession>
<keyword id="KW-0938">Abscisic acid signaling pathway</keyword>
<keyword id="KW-0010">Activator</keyword>
<keyword id="KW-0238">DNA-binding</keyword>
<keyword id="KW-0539">Nucleus</keyword>
<keyword id="KW-1185">Reference proteome</keyword>
<keyword id="KW-0346">Stress response</keyword>
<keyword id="KW-0804">Transcription</keyword>
<keyword id="KW-0805">Transcription regulation</keyword>